<organism>
    <name type="scientific">Kluyveromyces lactis (strain ATCC 8585 / CBS 2359 / DSM 70799 / NBRC 1267 / NRRL Y-1140 / WM37)</name>
    <name type="common">Yeast</name>
    <name type="synonym">Candida sphaerica</name>
    <dbReference type="NCBI Taxonomy" id="284590"/>
    <lineage>
        <taxon>Eukaryota</taxon>
        <taxon>Fungi</taxon>
        <taxon>Dikarya</taxon>
        <taxon>Ascomycota</taxon>
        <taxon>Saccharomycotina</taxon>
        <taxon>Saccharomycetes</taxon>
        <taxon>Saccharomycetales</taxon>
        <taxon>Saccharomycetaceae</taxon>
        <taxon>Kluyveromyces</taxon>
    </lineage>
</organism>
<evidence type="ECO:0000250" key="1"/>
<evidence type="ECO:0000255" key="2">
    <source>
        <dbReference type="PROSITE-ProRule" id="PRU00236"/>
    </source>
</evidence>
<evidence type="ECO:0000256" key="3">
    <source>
        <dbReference type="SAM" id="MobiDB-lite"/>
    </source>
</evidence>
<evidence type="ECO:0000305" key="4"/>
<gene>
    <name type="primary">SIR2</name>
    <name type="ordered locus">KLLA0F14663g</name>
</gene>
<accession>P33294</accession>
<accession>Q6CK00</accession>
<feature type="chain" id="PRO_0000110277" description="NAD-dependent histone deacetylase SIR2">
    <location>
        <begin position="1"/>
        <end position="670"/>
    </location>
</feature>
<feature type="domain" description="Deacetylase sirtuin-type" evidence="2">
    <location>
        <begin position="293"/>
        <end position="583"/>
    </location>
</feature>
<feature type="region of interest" description="Disordered" evidence="3">
    <location>
        <begin position="1"/>
        <end position="157"/>
    </location>
</feature>
<feature type="region of interest" description="Disordered" evidence="3">
    <location>
        <begin position="235"/>
        <end position="263"/>
    </location>
</feature>
<feature type="region of interest" description="Disordered" evidence="3">
    <location>
        <begin position="617"/>
        <end position="670"/>
    </location>
</feature>
<feature type="compositionally biased region" description="Acidic residues" evidence="3">
    <location>
        <begin position="45"/>
        <end position="68"/>
    </location>
</feature>
<feature type="compositionally biased region" description="Basic and acidic residues" evidence="3">
    <location>
        <begin position="69"/>
        <end position="81"/>
    </location>
</feature>
<feature type="compositionally biased region" description="Acidic residues" evidence="3">
    <location>
        <begin position="82"/>
        <end position="92"/>
    </location>
</feature>
<feature type="compositionally biased region" description="Polar residues" evidence="3">
    <location>
        <begin position="96"/>
        <end position="119"/>
    </location>
</feature>
<feature type="compositionally biased region" description="Low complexity" evidence="3">
    <location>
        <begin position="120"/>
        <end position="142"/>
    </location>
</feature>
<feature type="compositionally biased region" description="Polar residues" evidence="3">
    <location>
        <begin position="239"/>
        <end position="261"/>
    </location>
</feature>
<feature type="compositionally biased region" description="Low complexity" evidence="3">
    <location>
        <begin position="641"/>
        <end position="654"/>
    </location>
</feature>
<feature type="compositionally biased region" description="Polar residues" evidence="3">
    <location>
        <begin position="659"/>
        <end position="670"/>
    </location>
</feature>
<feature type="active site" description="Proton acceptor" evidence="2">
    <location>
        <position position="420"/>
    </location>
</feature>
<feature type="binding site" evidence="1">
    <location>
        <begin position="318"/>
        <end position="337"/>
    </location>
    <ligand>
        <name>NAD(+)</name>
        <dbReference type="ChEBI" id="CHEBI:57540"/>
    </ligand>
</feature>
<feature type="binding site" evidence="1">
    <location>
        <begin position="400"/>
        <end position="403"/>
    </location>
    <ligand>
        <name>NAD(+)</name>
        <dbReference type="ChEBI" id="CHEBI:57540"/>
    </ligand>
</feature>
<feature type="binding site" evidence="2">
    <location>
        <position position="428"/>
    </location>
    <ligand>
        <name>Zn(2+)</name>
        <dbReference type="ChEBI" id="CHEBI:29105"/>
    </ligand>
</feature>
<feature type="binding site" evidence="2">
    <location>
        <position position="431"/>
    </location>
    <ligand>
        <name>Zn(2+)</name>
        <dbReference type="ChEBI" id="CHEBI:29105"/>
    </ligand>
</feature>
<feature type="binding site" evidence="2">
    <location>
        <position position="452"/>
    </location>
    <ligand>
        <name>Zn(2+)</name>
        <dbReference type="ChEBI" id="CHEBI:29105"/>
    </ligand>
</feature>
<feature type="binding site" evidence="2">
    <location>
        <position position="455"/>
    </location>
    <ligand>
        <name>Zn(2+)</name>
        <dbReference type="ChEBI" id="CHEBI:29105"/>
    </ligand>
</feature>
<feature type="binding site" evidence="1">
    <location>
        <begin position="527"/>
        <end position="529"/>
    </location>
    <ligand>
        <name>NAD(+)</name>
        <dbReference type="ChEBI" id="CHEBI:57540"/>
    </ligand>
</feature>
<feature type="binding site" evidence="1">
    <location>
        <begin position="552"/>
        <end position="554"/>
    </location>
    <ligand>
        <name>NAD(+)</name>
        <dbReference type="ChEBI" id="CHEBI:57540"/>
    </ligand>
</feature>
<feature type="binding site" evidence="1">
    <location>
        <position position="569"/>
    </location>
    <ligand>
        <name>NAD(+)</name>
        <dbReference type="ChEBI" id="CHEBI:57540"/>
    </ligand>
</feature>
<feature type="sequence conflict" description="In Ref. 1; CAA52661." evidence="4" ref="1">
    <original>A</original>
    <variation>S</variation>
    <location>
        <position position="121"/>
    </location>
</feature>
<proteinExistence type="inferred from homology"/>
<name>SIR2_KLULA</name>
<dbReference type="EC" id="2.3.1.286" evidence="2"/>
<dbReference type="EMBL" id="X74569">
    <property type="protein sequence ID" value="CAA52661.1"/>
    <property type="molecule type" value="Genomic_DNA"/>
</dbReference>
<dbReference type="EMBL" id="CR382126">
    <property type="protein sequence ID" value="CAG98447.1"/>
    <property type="molecule type" value="Genomic_DNA"/>
</dbReference>
<dbReference type="PIR" id="A56048">
    <property type="entry name" value="S36616"/>
</dbReference>
<dbReference type="RefSeq" id="XP_455739.1">
    <property type="nucleotide sequence ID" value="XM_455739.1"/>
</dbReference>
<dbReference type="SMR" id="P33294"/>
<dbReference type="FunCoup" id="P33294">
    <property type="interactions" value="166"/>
</dbReference>
<dbReference type="STRING" id="284590.P33294"/>
<dbReference type="PaxDb" id="284590-P33294"/>
<dbReference type="KEGG" id="kla:KLLA0_F14663g"/>
<dbReference type="eggNOG" id="KOG2684">
    <property type="taxonomic scope" value="Eukaryota"/>
</dbReference>
<dbReference type="HOGENOM" id="CLU_023643_5_0_1"/>
<dbReference type="InParanoid" id="P33294"/>
<dbReference type="OMA" id="FHKTIRK"/>
<dbReference type="Proteomes" id="UP000000598">
    <property type="component" value="Chromosome F"/>
</dbReference>
<dbReference type="GO" id="GO:0005634">
    <property type="term" value="C:nucleus"/>
    <property type="evidence" value="ECO:0007669"/>
    <property type="project" value="UniProtKB-SubCell"/>
</dbReference>
<dbReference type="GO" id="GO:0046970">
    <property type="term" value="F:histone H4K16 deacetylase activity, NAD-dependent"/>
    <property type="evidence" value="ECO:0007669"/>
    <property type="project" value="TreeGrafter"/>
</dbReference>
<dbReference type="GO" id="GO:0046872">
    <property type="term" value="F:metal ion binding"/>
    <property type="evidence" value="ECO:0007669"/>
    <property type="project" value="UniProtKB-KW"/>
</dbReference>
<dbReference type="GO" id="GO:0070403">
    <property type="term" value="F:NAD+ binding"/>
    <property type="evidence" value="ECO:0007669"/>
    <property type="project" value="InterPro"/>
</dbReference>
<dbReference type="Gene3D" id="1.20.120.1710">
    <property type="match status" value="1"/>
</dbReference>
<dbReference type="Gene3D" id="3.30.1600.10">
    <property type="entry name" value="SIR2/SIRT2 'Small Domain"/>
    <property type="match status" value="1"/>
</dbReference>
<dbReference type="Gene3D" id="3.40.50.1220">
    <property type="entry name" value="TPP-binding domain"/>
    <property type="match status" value="1"/>
</dbReference>
<dbReference type="InterPro" id="IPR029035">
    <property type="entry name" value="DHS-like_NAD/FAD-binding_dom"/>
</dbReference>
<dbReference type="InterPro" id="IPR007654">
    <property type="entry name" value="NAD-dep_histone_deAcase_SIR2_N"/>
</dbReference>
<dbReference type="InterPro" id="IPR050134">
    <property type="entry name" value="NAD-dep_sirtuin_deacylases"/>
</dbReference>
<dbReference type="InterPro" id="IPR003000">
    <property type="entry name" value="Sirtuin"/>
</dbReference>
<dbReference type="InterPro" id="IPR026591">
    <property type="entry name" value="Sirtuin_cat_small_dom_sf"/>
</dbReference>
<dbReference type="InterPro" id="IPR026590">
    <property type="entry name" value="Ssirtuin_cat_dom"/>
</dbReference>
<dbReference type="PANTHER" id="PTHR11085:SF9">
    <property type="entry name" value="NAD-DEPENDENT PROTEIN DEACETYLASE SIRTUIN-1"/>
    <property type="match status" value="1"/>
</dbReference>
<dbReference type="PANTHER" id="PTHR11085">
    <property type="entry name" value="NAD-DEPENDENT PROTEIN DEACYLASE SIRTUIN-5, MITOCHONDRIAL-RELATED"/>
    <property type="match status" value="1"/>
</dbReference>
<dbReference type="Pfam" id="PF04574">
    <property type="entry name" value="DUF592"/>
    <property type="match status" value="1"/>
</dbReference>
<dbReference type="Pfam" id="PF02146">
    <property type="entry name" value="SIR2"/>
    <property type="match status" value="1"/>
</dbReference>
<dbReference type="SUPFAM" id="SSF52467">
    <property type="entry name" value="DHS-like NAD/FAD-binding domain"/>
    <property type="match status" value="1"/>
</dbReference>
<dbReference type="PROSITE" id="PS50305">
    <property type="entry name" value="SIRTUIN"/>
    <property type="match status" value="1"/>
</dbReference>
<reference key="1">
    <citation type="journal article" date="1994" name="Mol. Cell. Biol.">
        <title>SIR2 mutants of Kluyveromyces lactis are hypersensitive to DNA-targeting drugs.</title>
        <authorList>
            <person name="Chen X.-J."/>
            <person name="Clark-Walker D.G."/>
        </authorList>
    </citation>
    <scope>NUCLEOTIDE SEQUENCE [GENOMIC DNA]</scope>
    <source>
        <strain>ATCC 76492 / CBS 2359/152 / CLIB 210</strain>
    </source>
</reference>
<reference key="2">
    <citation type="journal article" date="2004" name="Nature">
        <title>Genome evolution in yeasts.</title>
        <authorList>
            <person name="Dujon B."/>
            <person name="Sherman D."/>
            <person name="Fischer G."/>
            <person name="Durrens P."/>
            <person name="Casaregola S."/>
            <person name="Lafontaine I."/>
            <person name="de Montigny J."/>
            <person name="Marck C."/>
            <person name="Neuveglise C."/>
            <person name="Talla E."/>
            <person name="Goffard N."/>
            <person name="Frangeul L."/>
            <person name="Aigle M."/>
            <person name="Anthouard V."/>
            <person name="Babour A."/>
            <person name="Barbe V."/>
            <person name="Barnay S."/>
            <person name="Blanchin S."/>
            <person name="Beckerich J.-M."/>
            <person name="Beyne E."/>
            <person name="Bleykasten C."/>
            <person name="Boisrame A."/>
            <person name="Boyer J."/>
            <person name="Cattolico L."/>
            <person name="Confanioleri F."/>
            <person name="de Daruvar A."/>
            <person name="Despons L."/>
            <person name="Fabre E."/>
            <person name="Fairhead C."/>
            <person name="Ferry-Dumazet H."/>
            <person name="Groppi A."/>
            <person name="Hantraye F."/>
            <person name="Hennequin C."/>
            <person name="Jauniaux N."/>
            <person name="Joyet P."/>
            <person name="Kachouri R."/>
            <person name="Kerrest A."/>
            <person name="Koszul R."/>
            <person name="Lemaire M."/>
            <person name="Lesur I."/>
            <person name="Ma L."/>
            <person name="Muller H."/>
            <person name="Nicaud J.-M."/>
            <person name="Nikolski M."/>
            <person name="Oztas S."/>
            <person name="Ozier-Kalogeropoulos O."/>
            <person name="Pellenz S."/>
            <person name="Potier S."/>
            <person name="Richard G.-F."/>
            <person name="Straub M.-L."/>
            <person name="Suleau A."/>
            <person name="Swennen D."/>
            <person name="Tekaia F."/>
            <person name="Wesolowski-Louvel M."/>
            <person name="Westhof E."/>
            <person name="Wirth B."/>
            <person name="Zeniou-Meyer M."/>
            <person name="Zivanovic Y."/>
            <person name="Bolotin-Fukuhara M."/>
            <person name="Thierry A."/>
            <person name="Bouchier C."/>
            <person name="Caudron B."/>
            <person name="Scarpelli C."/>
            <person name="Gaillardin C."/>
            <person name="Weissenbach J."/>
            <person name="Wincker P."/>
            <person name="Souciet J.-L."/>
        </authorList>
    </citation>
    <scope>NUCLEOTIDE SEQUENCE [LARGE SCALE GENOMIC DNA]</scope>
    <source>
        <strain>ATCC 8585 / CBS 2359 / DSM 70799 / NBRC 1267 / NRRL Y-1140 / WM37</strain>
    </source>
</reference>
<sequence length="670" mass="74212">MTEYYGTLQKRPLEQESVAEGNGGLESGKKARGDSDVFAARSPENEDVDVDADADVDADADADADAEEDAQKDILEETKADELDEVVDEYEEKEVSSNFNGTASDHVGITSSNTGSTALAASSADTNSGSGNGTGTMATNGTLSDRQYAPQKPEHPIKLERRSVSRKYVFPVISKEDSLNARSYLKQFGSARFLDDYLPEDLNSLYVYHMIKLLGFQIKDKELMLAIQEVVHNADNDDSLPQKNSSETKNVSDTYTATYPSPSFEDPLEKKHAVRLIKDLQKAMNKVLSTRIRLTNFHTIDDFVAKLKTAKKIIVLTGAGISTSLGIPDFRSSEGFYSKLGDLGLNDPQDVFSLEVFTEDPSVFYNIAHMVLPPENMYSPLHSFIKMIQDKDKLLRNYTQNIDNLESYAGVEPEKMVQCHGSFATASCVTCHWKIQGERIFPNIRNLQLPICPYCYSKRLEFFKTKTDEELADGEDDDMDDHHGRSVPKSFGVLKPDITFFGEALPSKFHRLIREDVLQCDLLICIGTSLKVAPVSEIVNMIPAHVPQVLINKDPVKHAEFDLSLLGLCDDVAALVAQKCGWDIPHDNWNKLKNKVFDSEEVERGVYKVHPLNESPAELEAEEEKHLPLQQSTAALTPPVSLSADSPGRSSSSSPQPPTQTDIANNQTST</sequence>
<protein>
    <recommendedName>
        <fullName>NAD-dependent histone deacetylase SIR2</fullName>
        <ecNumber evidence="2">2.3.1.286</ecNumber>
    </recommendedName>
    <alternativeName>
        <fullName>Regulatory protein SIR2</fullName>
    </alternativeName>
    <alternativeName>
        <fullName>Silent information regulator 2</fullName>
    </alternativeName>
</protein>
<comment type="function">
    <text evidence="1">NAD-dependent deacetylase, which asts as a key regulator of gene expression believed to help form modified chromatin structures on the genes it regulates. It is involved in telomeric silencing and in hm mating type loci silencing (By similarity).</text>
</comment>
<comment type="catalytic activity">
    <reaction evidence="2">
        <text>N(6)-acetyl-L-lysyl-[protein] + NAD(+) + H2O = 2''-O-acetyl-ADP-D-ribose + nicotinamide + L-lysyl-[protein]</text>
        <dbReference type="Rhea" id="RHEA:43636"/>
        <dbReference type="Rhea" id="RHEA-COMP:9752"/>
        <dbReference type="Rhea" id="RHEA-COMP:10731"/>
        <dbReference type="ChEBI" id="CHEBI:15377"/>
        <dbReference type="ChEBI" id="CHEBI:17154"/>
        <dbReference type="ChEBI" id="CHEBI:29969"/>
        <dbReference type="ChEBI" id="CHEBI:57540"/>
        <dbReference type="ChEBI" id="CHEBI:61930"/>
        <dbReference type="ChEBI" id="CHEBI:83767"/>
        <dbReference type="EC" id="2.3.1.286"/>
    </reaction>
</comment>
<comment type="cofactor">
    <cofactor evidence="1">
        <name>Zn(2+)</name>
        <dbReference type="ChEBI" id="CHEBI:29105"/>
    </cofactor>
    <text evidence="1">Binds 1 zinc ion per subunit.</text>
</comment>
<comment type="subcellular location">
    <subcellularLocation>
        <location evidence="4">Nucleus</location>
    </subcellularLocation>
</comment>
<comment type="similarity">
    <text evidence="4">Belongs to the sirtuin family. Class I subfamily.</text>
</comment>
<keyword id="KW-0479">Metal-binding</keyword>
<keyword id="KW-0520">NAD</keyword>
<keyword id="KW-0539">Nucleus</keyword>
<keyword id="KW-1185">Reference proteome</keyword>
<keyword id="KW-0678">Repressor</keyword>
<keyword id="KW-0804">Transcription</keyword>
<keyword id="KW-0805">Transcription regulation</keyword>
<keyword id="KW-0808">Transferase</keyword>
<keyword id="KW-0862">Zinc</keyword>